<protein>
    <recommendedName>
        <fullName>Protein ninE</fullName>
    </recommendedName>
</protein>
<evidence type="ECO:0000305" key="1"/>
<organismHost>
    <name type="scientific">Escherichia coli</name>
    <dbReference type="NCBI Taxonomy" id="562"/>
</organismHost>
<organism>
    <name type="scientific">Enterobacteria phage H19B</name>
    <name type="common">Bacteriophage H19B</name>
    <dbReference type="NCBI Taxonomy" id="69932"/>
    <lineage>
        <taxon>Viruses</taxon>
        <taxon>Duplodnaviria</taxon>
        <taxon>Heunggongvirae</taxon>
        <taxon>Uroviricota</taxon>
        <taxon>Caudoviricetes</taxon>
        <taxon>Lambdavirus</taxon>
    </lineage>
</organism>
<comment type="similarity">
    <text evidence="1">Belongs to the ninE family.</text>
</comment>
<accession>O48424</accession>
<proteinExistence type="inferred from homology"/>
<name>NINE_BPH19</name>
<dbReference type="EMBL" id="AF034975">
    <property type="protein sequence ID" value="AAD04650.1"/>
    <property type="molecule type" value="Genomic_DNA"/>
</dbReference>
<dbReference type="InterPro" id="IPR007986">
    <property type="entry name" value="NINE"/>
</dbReference>
<dbReference type="Pfam" id="PF05322">
    <property type="entry name" value="NinE"/>
    <property type="match status" value="1"/>
</dbReference>
<reference key="1">
    <citation type="journal article" date="1998" name="Mol. Microbiol.">
        <title>Functional and genetic analysis of regulatory regions of coliphage H-19B: location of shiga-like toxin and lysis genes suggest a role for phage functions in toxin release.</title>
        <authorList>
            <person name="Neely M.N."/>
            <person name="Friedman D.I."/>
        </authorList>
    </citation>
    <scope>NUCLEOTIDE SEQUENCE [GENOMIC DNA]</scope>
</reference>
<feature type="chain" id="PRO_0000077619" description="Protein ninE">
    <location>
        <begin position="1"/>
        <end position="58"/>
    </location>
</feature>
<sequence>MRRQRRSITDIICENCKYLPTKRSRNKAKPIPKESDVKTFNYTAHLWDIRWLRHRARK</sequence>
<gene>
    <name type="primary">ninE</name>
</gene>